<proteinExistence type="uncertain"/>
<name>YJG4_YEAST</name>
<dbReference type="EMBL" id="Z49340">
    <property type="protein sequence ID" value="CAA89356.1"/>
    <property type="molecule type" value="Genomic_DNA"/>
</dbReference>
<dbReference type="EMBL" id="Z34288">
    <property type="protein sequence ID" value="CAA84058.1"/>
    <property type="molecule type" value="Genomic_DNA"/>
</dbReference>
<dbReference type="PIR" id="S50807">
    <property type="entry name" value="S50807"/>
</dbReference>
<dbReference type="DIP" id="DIP-1977N"/>
<dbReference type="IntAct" id="P47038">
    <property type="interactions" value="1"/>
</dbReference>
<dbReference type="MINT" id="P47038"/>
<dbReference type="STRING" id="4932.YJL064W"/>
<dbReference type="PaxDb" id="4932-YJL064W"/>
<dbReference type="EnsemblFungi" id="YJL064W_mRNA">
    <property type="protein sequence ID" value="YJL064W"/>
    <property type="gene ID" value="YJL064W"/>
</dbReference>
<dbReference type="AGR" id="SGD:S000003600"/>
<dbReference type="SGD" id="S000003600">
    <property type="gene designation" value="YJL064W"/>
</dbReference>
<dbReference type="HOGENOM" id="CLU_1929225_0_0_1"/>
<sequence length="131" mass="13854">MTLVVYLTRFSSTRSLKFFVVGITSFKNCRWPSEECTIAAEMSSYDSVSSSGSGGTCCCCCCCCLCRDSCVSTWTKNSVANAVATNASSEVSIYSGSFLAILCTFSTGNLGEHRGADAVSLPLVSLFIVLA</sequence>
<reference key="1">
    <citation type="journal article" date="1995" name="Yeast">
        <title>Sequence of a 17.1 kb DNA fragment from chromosome X of Saccharomyces cerevisiae includes the mitochondrial ribosomal protein L8.</title>
        <authorList>
            <person name="Vandenbol M."/>
            <person name="Durand P."/>
            <person name="Dion C."/>
            <person name="Portetelle D."/>
            <person name="Hilger F."/>
        </authorList>
    </citation>
    <scope>NUCLEOTIDE SEQUENCE [GENOMIC DNA]</scope>
    <source>
        <strain>ATCC 204508 / S288c</strain>
    </source>
</reference>
<reference key="2">
    <citation type="journal article" date="1996" name="EMBO J.">
        <title>Complete nucleotide sequence of Saccharomyces cerevisiae chromosome X.</title>
        <authorList>
            <person name="Galibert F."/>
            <person name="Alexandraki D."/>
            <person name="Baur A."/>
            <person name="Boles E."/>
            <person name="Chalwatzis N."/>
            <person name="Chuat J.-C."/>
            <person name="Coster F."/>
            <person name="Cziepluch C."/>
            <person name="de Haan M."/>
            <person name="Domdey H."/>
            <person name="Durand P."/>
            <person name="Entian K.-D."/>
            <person name="Gatius M."/>
            <person name="Goffeau A."/>
            <person name="Grivell L.A."/>
            <person name="Hennemann A."/>
            <person name="Herbert C.J."/>
            <person name="Heumann K."/>
            <person name="Hilger F."/>
            <person name="Hollenberg C.P."/>
            <person name="Huang M.-E."/>
            <person name="Jacq C."/>
            <person name="Jauniaux J.-C."/>
            <person name="Katsoulou C."/>
            <person name="Kirchrath L."/>
            <person name="Kleine K."/>
            <person name="Kordes E."/>
            <person name="Koetter P."/>
            <person name="Liebl S."/>
            <person name="Louis E.J."/>
            <person name="Manus V."/>
            <person name="Mewes H.-W."/>
            <person name="Miosga T."/>
            <person name="Obermaier B."/>
            <person name="Perea J."/>
            <person name="Pohl T.M."/>
            <person name="Portetelle D."/>
            <person name="Pujol A."/>
            <person name="Purnelle B."/>
            <person name="Ramezani Rad M."/>
            <person name="Rasmussen S.W."/>
            <person name="Rose M."/>
            <person name="Rossau R."/>
            <person name="Schaaff-Gerstenschlaeger I."/>
            <person name="Smits P.H.M."/>
            <person name="Scarcez T."/>
            <person name="Soriano N."/>
            <person name="To Van D."/>
            <person name="Tzermia M."/>
            <person name="Van Broekhoven A."/>
            <person name="Vandenbol M."/>
            <person name="Wedler H."/>
            <person name="von Wettstein D."/>
            <person name="Wambutt R."/>
            <person name="Zagulski M."/>
            <person name="Zollner A."/>
            <person name="Karpfinger-Hartl L."/>
        </authorList>
    </citation>
    <scope>NUCLEOTIDE SEQUENCE [LARGE SCALE GENOMIC DNA]</scope>
    <source>
        <strain>ATCC 204508 / S288c</strain>
    </source>
</reference>
<reference key="3">
    <citation type="journal article" date="2014" name="G3 (Bethesda)">
        <title>The reference genome sequence of Saccharomyces cerevisiae: Then and now.</title>
        <authorList>
            <person name="Engel S.R."/>
            <person name="Dietrich F.S."/>
            <person name="Fisk D.G."/>
            <person name="Binkley G."/>
            <person name="Balakrishnan R."/>
            <person name="Costanzo M.C."/>
            <person name="Dwight S.S."/>
            <person name="Hitz B.C."/>
            <person name="Karra K."/>
            <person name="Nash R.S."/>
            <person name="Weng S."/>
            <person name="Wong E.D."/>
            <person name="Lloyd P."/>
            <person name="Skrzypek M.S."/>
            <person name="Miyasato S.R."/>
            <person name="Simison M."/>
            <person name="Cherry J.M."/>
        </authorList>
    </citation>
    <scope>GENOME REANNOTATION</scope>
    <source>
        <strain>ATCC 204508 / S288c</strain>
    </source>
</reference>
<feature type="chain" id="PRO_0000203058" description="Putative uncharacterized protein YJL064W">
    <location>
        <begin position="1"/>
        <end position="131"/>
    </location>
</feature>
<comment type="miscellaneous">
    <text evidence="1">Completely overlaps DLS1.</text>
</comment>
<comment type="caution">
    <text evidence="2">Product of a dubious gene prediction unlikely to encode a functional protein. Because of that it is not part of the S.cerevisiae S288c complete/reference proteome set.</text>
</comment>
<protein>
    <recommendedName>
        <fullName>Putative uncharacterized protein YJL064W</fullName>
    </recommendedName>
</protein>
<organism>
    <name type="scientific">Saccharomyces cerevisiae (strain ATCC 204508 / S288c)</name>
    <name type="common">Baker's yeast</name>
    <dbReference type="NCBI Taxonomy" id="559292"/>
    <lineage>
        <taxon>Eukaryota</taxon>
        <taxon>Fungi</taxon>
        <taxon>Dikarya</taxon>
        <taxon>Ascomycota</taxon>
        <taxon>Saccharomycotina</taxon>
        <taxon>Saccharomycetes</taxon>
        <taxon>Saccharomycetales</taxon>
        <taxon>Saccharomycetaceae</taxon>
        <taxon>Saccharomyces</taxon>
    </lineage>
</organism>
<accession>P47038</accession>
<evidence type="ECO:0000305" key="1"/>
<evidence type="ECO:0000305" key="2">
    <source>
    </source>
</evidence>
<gene>
    <name type="ordered locus">YJL064W</name>
    <name type="ORF">HRC131</name>
    <name type="ORF">J1120</name>
</gene>